<protein>
    <recommendedName>
        <fullName evidence="1">Bifunctional protein Aas</fullName>
    </recommendedName>
    <domain>
        <recommendedName>
            <fullName evidence="1">2-acylglycerophosphoethanolamine acyltransferase</fullName>
            <ecNumber evidence="1">2.3.1.40</ecNumber>
        </recommendedName>
        <alternativeName>
            <fullName evidence="1">2-acyl-GPE acyltransferase</fullName>
        </alternativeName>
        <alternativeName>
            <fullName evidence="1">Acyl-[acyl-carrier-protein]--phospholipid O-acyltransferase</fullName>
        </alternativeName>
    </domain>
    <domain>
        <recommendedName>
            <fullName evidence="1">Acyl-[acyl-carrier-protein] synthetase</fullName>
            <ecNumber evidence="1">6.2.1.20</ecNumber>
        </recommendedName>
        <alternativeName>
            <fullName evidence="1">Acyl-ACP synthetase</fullName>
        </alternativeName>
        <alternativeName>
            <fullName evidence="1">Long-chain-fatty-acid--[acyl-carrier-protein] ligase</fullName>
        </alternativeName>
    </domain>
</protein>
<comment type="function">
    <text evidence="1">Plays a role in lysophospholipid acylation. Transfers fatty acids to the 1-position via an enzyme-bound acyl-ACP intermediate in the presence of ATP and magnesium. Its physiological function is to regenerate phosphatidylethanolamine from 2-acyl-glycero-3-phosphoethanolamine (2-acyl-GPE) formed by transacylation reactions or degradation by phospholipase A1.</text>
</comment>
<comment type="catalytic activity">
    <reaction evidence="1">
        <text>a 2-acyl-sn-glycero-3-phosphoethanolamine + a fatty acyl-[ACP] = a 1,2-diacyl-sn-glycero-3-phosphoethanolamine + holo-[ACP]</text>
        <dbReference type="Rhea" id="RHEA:10304"/>
        <dbReference type="Rhea" id="RHEA-COMP:9685"/>
        <dbReference type="Rhea" id="RHEA-COMP:14125"/>
        <dbReference type="ChEBI" id="CHEBI:64479"/>
        <dbReference type="ChEBI" id="CHEBI:64612"/>
        <dbReference type="ChEBI" id="CHEBI:65213"/>
        <dbReference type="ChEBI" id="CHEBI:138651"/>
        <dbReference type="EC" id="2.3.1.40"/>
    </reaction>
</comment>
<comment type="catalytic activity">
    <reaction evidence="1">
        <text>a long-chain fatty acid + holo-[ACP] + ATP = a long-chain fatty acyl-[ACP] + AMP + diphosphate</text>
        <dbReference type="Rhea" id="RHEA:45588"/>
        <dbReference type="Rhea" id="RHEA-COMP:9685"/>
        <dbReference type="Rhea" id="RHEA-COMP:12682"/>
        <dbReference type="ChEBI" id="CHEBI:30616"/>
        <dbReference type="ChEBI" id="CHEBI:33019"/>
        <dbReference type="ChEBI" id="CHEBI:57560"/>
        <dbReference type="ChEBI" id="CHEBI:64479"/>
        <dbReference type="ChEBI" id="CHEBI:133243"/>
        <dbReference type="ChEBI" id="CHEBI:456215"/>
        <dbReference type="EC" id="6.2.1.20"/>
    </reaction>
</comment>
<comment type="subcellular location">
    <subcellularLocation>
        <location evidence="1">Cell inner membrane</location>
        <topology evidence="1">Multi-pass membrane protein</topology>
    </subcellularLocation>
</comment>
<comment type="similarity">
    <text evidence="1">In the N-terminal section; belongs to the 2-acyl-GPE acetyltransferase family.</text>
</comment>
<comment type="similarity">
    <text evidence="1">In the C-terminal section; belongs to the ATP-dependent AMP-binding enzyme family.</text>
</comment>
<name>AAS_SHIFL</name>
<feature type="chain" id="PRO_0000193054" description="Bifunctional protein Aas">
    <location>
        <begin position="1"/>
        <end position="719"/>
    </location>
</feature>
<feature type="transmembrane region" description="Helical" evidence="1">
    <location>
        <begin position="258"/>
        <end position="277"/>
    </location>
</feature>
<feature type="transmembrane region" description="Helical" evidence="1">
    <location>
        <begin position="409"/>
        <end position="433"/>
    </location>
</feature>
<feature type="region of interest" description="Acyltransferase">
    <location>
        <begin position="15"/>
        <end position="138"/>
    </location>
</feature>
<feature type="region of interest" description="AMP-binding">
    <location>
        <begin position="233"/>
        <end position="646"/>
    </location>
</feature>
<feature type="active site" evidence="1">
    <location>
        <position position="36"/>
    </location>
</feature>
<organism>
    <name type="scientific">Shigella flexneri</name>
    <dbReference type="NCBI Taxonomy" id="623"/>
    <lineage>
        <taxon>Bacteria</taxon>
        <taxon>Pseudomonadati</taxon>
        <taxon>Pseudomonadota</taxon>
        <taxon>Gammaproteobacteria</taxon>
        <taxon>Enterobacterales</taxon>
        <taxon>Enterobacteriaceae</taxon>
        <taxon>Shigella</taxon>
    </lineage>
</organism>
<keyword id="KW-0012">Acyltransferase</keyword>
<keyword id="KW-0067">ATP-binding</keyword>
<keyword id="KW-0997">Cell inner membrane</keyword>
<keyword id="KW-1003">Cell membrane</keyword>
<keyword id="KW-0436">Ligase</keyword>
<keyword id="KW-0472">Membrane</keyword>
<keyword id="KW-0511">Multifunctional enzyme</keyword>
<keyword id="KW-0547">Nucleotide-binding</keyword>
<keyword id="KW-1185">Reference proteome</keyword>
<keyword id="KW-0808">Transferase</keyword>
<keyword id="KW-0812">Transmembrane</keyword>
<keyword id="KW-1133">Transmembrane helix</keyword>
<proteinExistence type="inferred from homology"/>
<dbReference type="EC" id="2.3.1.40" evidence="1"/>
<dbReference type="EC" id="6.2.1.20" evidence="1"/>
<dbReference type="EMBL" id="AE005674">
    <property type="protein sequence ID" value="AAN44332.1"/>
    <property type="molecule type" value="Genomic_DNA"/>
</dbReference>
<dbReference type="EMBL" id="AE014073">
    <property type="protein sequence ID" value="AAP18158.1"/>
    <property type="molecule type" value="Genomic_DNA"/>
</dbReference>
<dbReference type="RefSeq" id="NP_708625.1">
    <property type="nucleotide sequence ID" value="NC_004337.2"/>
</dbReference>
<dbReference type="RefSeq" id="WP_000899047.1">
    <property type="nucleotide sequence ID" value="NZ_WPGW01000008.1"/>
</dbReference>
<dbReference type="SMR" id="Q83JV7"/>
<dbReference type="STRING" id="198214.SF2846"/>
<dbReference type="PaxDb" id="198214-SF2846"/>
<dbReference type="GeneID" id="1026818"/>
<dbReference type="KEGG" id="sfl:SF2846"/>
<dbReference type="KEGG" id="sfx:S3044"/>
<dbReference type="PATRIC" id="fig|198214.7.peg.3386"/>
<dbReference type="HOGENOM" id="CLU_000022_59_8_6"/>
<dbReference type="Proteomes" id="UP000001006">
    <property type="component" value="Chromosome"/>
</dbReference>
<dbReference type="Proteomes" id="UP000002673">
    <property type="component" value="Chromosome"/>
</dbReference>
<dbReference type="GO" id="GO:0005886">
    <property type="term" value="C:plasma membrane"/>
    <property type="evidence" value="ECO:0007669"/>
    <property type="project" value="UniProtKB-SubCell"/>
</dbReference>
<dbReference type="GO" id="GO:0008779">
    <property type="term" value="F:acyl-[acyl-carrier-protein]-phospholipid O-acyltransferase activity"/>
    <property type="evidence" value="ECO:0007669"/>
    <property type="project" value="UniProtKB-UniRule"/>
</dbReference>
<dbReference type="GO" id="GO:0005524">
    <property type="term" value="F:ATP binding"/>
    <property type="evidence" value="ECO:0007669"/>
    <property type="project" value="UniProtKB-KW"/>
</dbReference>
<dbReference type="GO" id="GO:0008922">
    <property type="term" value="F:long-chain fatty acid [acyl-carrier-protein] ligase activity"/>
    <property type="evidence" value="ECO:0007669"/>
    <property type="project" value="UniProtKB-UniRule"/>
</dbReference>
<dbReference type="GO" id="GO:0031956">
    <property type="term" value="F:medium-chain fatty acid-CoA ligase activity"/>
    <property type="evidence" value="ECO:0007669"/>
    <property type="project" value="TreeGrafter"/>
</dbReference>
<dbReference type="GO" id="GO:0006631">
    <property type="term" value="P:fatty acid metabolic process"/>
    <property type="evidence" value="ECO:0007669"/>
    <property type="project" value="InterPro"/>
</dbReference>
<dbReference type="GO" id="GO:0008654">
    <property type="term" value="P:phospholipid biosynthetic process"/>
    <property type="evidence" value="ECO:0007669"/>
    <property type="project" value="InterPro"/>
</dbReference>
<dbReference type="CDD" id="cd05909">
    <property type="entry name" value="AAS_C"/>
    <property type="match status" value="1"/>
</dbReference>
<dbReference type="CDD" id="cd07989">
    <property type="entry name" value="LPLAT_AGPAT-like"/>
    <property type="match status" value="1"/>
</dbReference>
<dbReference type="FunFam" id="3.30.300.30:FF:000009">
    <property type="entry name" value="Bifunctional protein Aas"/>
    <property type="match status" value="1"/>
</dbReference>
<dbReference type="FunFam" id="3.40.50.12780:FF:000009">
    <property type="entry name" value="Bifunctional protein Aas"/>
    <property type="match status" value="1"/>
</dbReference>
<dbReference type="Gene3D" id="3.30.300.30">
    <property type="match status" value="1"/>
</dbReference>
<dbReference type="Gene3D" id="3.40.50.12780">
    <property type="entry name" value="N-terminal domain of ligase-like"/>
    <property type="match status" value="1"/>
</dbReference>
<dbReference type="HAMAP" id="MF_01162">
    <property type="entry name" value="Aas"/>
    <property type="match status" value="1"/>
</dbReference>
<dbReference type="InterPro" id="IPR023775">
    <property type="entry name" value="Aas"/>
</dbReference>
<dbReference type="InterPro" id="IPR045851">
    <property type="entry name" value="AMP-bd_C_sf"/>
</dbReference>
<dbReference type="InterPro" id="IPR020845">
    <property type="entry name" value="AMP-binding_CS"/>
</dbReference>
<dbReference type="InterPro" id="IPR000873">
    <property type="entry name" value="AMP-dep_synth/lig_dom"/>
</dbReference>
<dbReference type="InterPro" id="IPR042099">
    <property type="entry name" value="ANL_N_sf"/>
</dbReference>
<dbReference type="InterPro" id="IPR002123">
    <property type="entry name" value="Plipid/glycerol_acylTrfase"/>
</dbReference>
<dbReference type="NCBIfam" id="NF005959">
    <property type="entry name" value="PRK08043.1"/>
    <property type="match status" value="1"/>
</dbReference>
<dbReference type="PANTHER" id="PTHR43201">
    <property type="entry name" value="ACYL-COA SYNTHETASE"/>
    <property type="match status" value="1"/>
</dbReference>
<dbReference type="PANTHER" id="PTHR43201:SF8">
    <property type="entry name" value="ACYL-COA SYNTHETASE FAMILY MEMBER 3"/>
    <property type="match status" value="1"/>
</dbReference>
<dbReference type="Pfam" id="PF01553">
    <property type="entry name" value="Acyltransferase"/>
    <property type="match status" value="1"/>
</dbReference>
<dbReference type="Pfam" id="PF00501">
    <property type="entry name" value="AMP-binding"/>
    <property type="match status" value="1"/>
</dbReference>
<dbReference type="SMART" id="SM00563">
    <property type="entry name" value="PlsC"/>
    <property type="match status" value="1"/>
</dbReference>
<dbReference type="SUPFAM" id="SSF56801">
    <property type="entry name" value="Acetyl-CoA synthetase-like"/>
    <property type="match status" value="1"/>
</dbReference>
<dbReference type="SUPFAM" id="SSF69593">
    <property type="entry name" value="Glycerol-3-phosphate (1)-acyltransferase"/>
    <property type="match status" value="1"/>
</dbReference>
<dbReference type="PROSITE" id="PS00455">
    <property type="entry name" value="AMP_BINDING"/>
    <property type="match status" value="1"/>
</dbReference>
<reference key="1">
    <citation type="journal article" date="2002" name="Nucleic Acids Res.">
        <title>Genome sequence of Shigella flexneri 2a: insights into pathogenicity through comparison with genomes of Escherichia coli K12 and O157.</title>
        <authorList>
            <person name="Jin Q."/>
            <person name="Yuan Z."/>
            <person name="Xu J."/>
            <person name="Wang Y."/>
            <person name="Shen Y."/>
            <person name="Lu W."/>
            <person name="Wang J."/>
            <person name="Liu H."/>
            <person name="Yang J."/>
            <person name="Yang F."/>
            <person name="Zhang X."/>
            <person name="Zhang J."/>
            <person name="Yang G."/>
            <person name="Wu H."/>
            <person name="Qu D."/>
            <person name="Dong J."/>
            <person name="Sun L."/>
            <person name="Xue Y."/>
            <person name="Zhao A."/>
            <person name="Gao Y."/>
            <person name="Zhu J."/>
            <person name="Kan B."/>
            <person name="Ding K."/>
            <person name="Chen S."/>
            <person name="Cheng H."/>
            <person name="Yao Z."/>
            <person name="He B."/>
            <person name="Chen R."/>
            <person name="Ma D."/>
            <person name="Qiang B."/>
            <person name="Wen Y."/>
            <person name="Hou Y."/>
            <person name="Yu J."/>
        </authorList>
    </citation>
    <scope>NUCLEOTIDE SEQUENCE [LARGE SCALE GENOMIC DNA]</scope>
    <source>
        <strain>301 / Serotype 2a</strain>
    </source>
</reference>
<reference key="2">
    <citation type="journal article" date="2003" name="Infect. Immun.">
        <title>Complete genome sequence and comparative genomics of Shigella flexneri serotype 2a strain 2457T.</title>
        <authorList>
            <person name="Wei J."/>
            <person name="Goldberg M.B."/>
            <person name="Burland V."/>
            <person name="Venkatesan M.M."/>
            <person name="Deng W."/>
            <person name="Fournier G."/>
            <person name="Mayhew G.F."/>
            <person name="Plunkett G. III"/>
            <person name="Rose D.J."/>
            <person name="Darling A."/>
            <person name="Mau B."/>
            <person name="Perna N.T."/>
            <person name="Payne S.M."/>
            <person name="Runyen-Janecky L.J."/>
            <person name="Zhou S."/>
            <person name="Schwartz D.C."/>
            <person name="Blattner F.R."/>
        </authorList>
    </citation>
    <scope>NUCLEOTIDE SEQUENCE [LARGE SCALE GENOMIC DNA]</scope>
    <source>
        <strain>ATCC 700930 / 2457T / Serotype 2a</strain>
    </source>
</reference>
<gene>
    <name evidence="1" type="primary">aas</name>
    <name type="ordered locus">SF2846</name>
    <name type="ordered locus">S3044</name>
</gene>
<evidence type="ECO:0000255" key="1">
    <source>
        <dbReference type="HAMAP-Rule" id="MF_01162"/>
    </source>
</evidence>
<accession>Q83JV7</accession>
<accession>Q7C061</accession>
<sequence length="719" mass="80668">MLFSFFRNLCRVLYRVRVTGDTQALKGERVLITPNHVSFIDGILLGLFLPVRPVFAVYTSISQQWYMRWLKSFIDFVPLDPTQPMAIKHLVRLVEQGRPVVIFPEGRITTTGSLMKIYDGAGFVAAKSGATVIPVRIEGAELTHFSRLKGLVKRRLFPQITLHILPPTQVAMPDAPRARDRRKIAGEMLHQIMMEARMAVRPRETLYESLLSAMYRFGAGKKCVEDVNFTPDSYRKLLTKTLFVGRILEKYSVEGERIGLMLPNAGISAAVIFGAIARRRIPAMMNYTAGVKGLTSAITAAEIKTIFTSRQFLDKGKLWHLPEQLTQVRWVYLEDLKADVTTADKVWIFAHLLMPRLAQVKQQPEEEALILFTSGSEGHPKGVVHSHKSILANVEQIKTIADFTTNDRFMSALPLFHSFGLTVGLFTPLLTGAEVFLYPSPLHYRIVPDLVYDRSCTVLFGTSTFLGHYARFANPYDFYRLRYVVAGAEKLQESTKQLWQDKFGLRILEGYGVTECAPVVSINVPMAAKPGTVGRILPGMDARLLSVPGIEEGGRLQLKGPNIMNGYLRVEKPGVLEVPTAENVRGEMERGWYDTGDIVRFDEQGFVQIQGRAKRFAKIAGEMVSLEMVEQLALGVSPDKVHATAIKSDASKGEALVLFTTDNELTRDKLQQYAREHGVPELAVPRDIRYLKQMPLLGSGKPDFVTLKSWVDEAEQHDE</sequence>